<keyword id="KW-0175">Coiled coil</keyword>
<keyword id="KW-1185">Reference proteome</keyword>
<comment type="function">
    <text evidence="1">Protein modifier that is covalently attached to lysine residues of substrate proteins, thereby targeting them for proteasomal degradation. The tagging system is termed pupylation. Among the identified substrates are the FabD, PanB and Mpa proteins (By similarity).</text>
</comment>
<comment type="pathway">
    <text>Protein degradation; proteasomal Pup-dependent pathway.</text>
</comment>
<comment type="subunit">
    <text evidence="1">Strongly interacts with the proteasome-associated ATPase ARC (Mpa) through a hydrophobic interface; the interacting region of Pup lies in its C-terminal half.</text>
</comment>
<comment type="PTM">
    <text evidence="1">Is modified by deamidation of its C-terminal glutamine to glutamate by the deamidase Dop, a prerequisite to the subsequent pupylation process.</text>
</comment>
<comment type="similarity">
    <text evidence="4">Belongs to the prokaryotic ubiquitin-like protein family.</text>
</comment>
<accession>P9WHN4</accession>
<accession>B6DAC1</accession>
<accession>L0TBK1</accession>
<accession>O33246</accession>
<accession>Q7D7I1</accession>
<organism>
    <name type="scientific">Mycobacterium tuberculosis (strain CDC 1551 / Oshkosh)</name>
    <dbReference type="NCBI Taxonomy" id="83331"/>
    <lineage>
        <taxon>Bacteria</taxon>
        <taxon>Bacillati</taxon>
        <taxon>Actinomycetota</taxon>
        <taxon>Actinomycetes</taxon>
        <taxon>Mycobacteriales</taxon>
        <taxon>Mycobacteriaceae</taxon>
        <taxon>Mycobacterium</taxon>
        <taxon>Mycobacterium tuberculosis complex</taxon>
    </lineage>
</organism>
<reference key="1">
    <citation type="journal article" date="2002" name="J. Bacteriol.">
        <title>Whole-genome comparison of Mycobacterium tuberculosis clinical and laboratory strains.</title>
        <authorList>
            <person name="Fleischmann R.D."/>
            <person name="Alland D."/>
            <person name="Eisen J.A."/>
            <person name="Carpenter L."/>
            <person name="White O."/>
            <person name="Peterson J.D."/>
            <person name="DeBoy R.T."/>
            <person name="Dodson R.J."/>
            <person name="Gwinn M.L."/>
            <person name="Haft D.H."/>
            <person name="Hickey E.K."/>
            <person name="Kolonay J.F."/>
            <person name="Nelson W.C."/>
            <person name="Umayam L.A."/>
            <person name="Ermolaeva M.D."/>
            <person name="Salzberg S.L."/>
            <person name="Delcher A."/>
            <person name="Utterback T.R."/>
            <person name="Weidman J.F."/>
            <person name="Khouri H.M."/>
            <person name="Gill J."/>
            <person name="Mikula A."/>
            <person name="Bishai W."/>
            <person name="Jacobs W.R. Jr."/>
            <person name="Venter J.C."/>
            <person name="Fraser C.M."/>
        </authorList>
    </citation>
    <scope>NUCLEOTIDE SEQUENCE [LARGE SCALE GENOMIC DNA]</scope>
    <source>
        <strain>CDC 1551 / Oshkosh</strain>
    </source>
</reference>
<evidence type="ECO:0000250" key="1"/>
<evidence type="ECO:0000255" key="2"/>
<evidence type="ECO:0000256" key="3">
    <source>
        <dbReference type="SAM" id="MobiDB-lite"/>
    </source>
</evidence>
<evidence type="ECO:0000305" key="4"/>
<proteinExistence type="inferred from homology"/>
<sequence>MAQEQTKRGGGGGDDDDIAGSTAAGQERREKLTEETDDLLDEIDDVLEENAEDFVRAYVQKGGQ</sequence>
<name>PUP_MYCTO</name>
<protein>
    <recommendedName>
        <fullName>Prokaryotic ubiquitin-like protein Pup</fullName>
    </recommendedName>
    <alternativeName>
        <fullName>Bacterial ubiquitin-like modifier</fullName>
    </alternativeName>
</protein>
<gene>
    <name type="primary">pup</name>
    <name type="ordered locus">MT2171</name>
</gene>
<feature type="chain" id="PRO_0000428154" description="Prokaryotic ubiquitin-like protein Pup">
    <location>
        <begin position="1"/>
        <end position="64"/>
    </location>
</feature>
<feature type="region of interest" description="Disordered" evidence="3">
    <location>
        <begin position="1"/>
        <end position="37"/>
    </location>
</feature>
<feature type="region of interest" description="Mpa/ARC ATPase binding" evidence="1">
    <location>
        <begin position="21"/>
        <end position="58"/>
    </location>
</feature>
<feature type="coiled-coil region" evidence="2">
    <location>
        <begin position="23"/>
        <end position="52"/>
    </location>
</feature>
<feature type="modified residue" description="Deamidated glutamine" evidence="1">
    <location>
        <position position="64"/>
    </location>
</feature>
<dbReference type="EMBL" id="AE000516">
    <property type="protein sequence ID" value="AAK46454.1"/>
    <property type="molecule type" value="Genomic_DNA"/>
</dbReference>
<dbReference type="PIR" id="B70512">
    <property type="entry name" value="B70512"/>
</dbReference>
<dbReference type="RefSeq" id="WP_003411026.1">
    <property type="nucleotide sequence ID" value="NZ_KK341227.1"/>
</dbReference>
<dbReference type="SMR" id="P9WHN4"/>
<dbReference type="KEGG" id="mtc:MT2171"/>
<dbReference type="PATRIC" id="fig|83331.31.peg.2341"/>
<dbReference type="HOGENOM" id="CLU_183816_1_0_11"/>
<dbReference type="UniPathway" id="UPA00997"/>
<dbReference type="Proteomes" id="UP000001020">
    <property type="component" value="Chromosome"/>
</dbReference>
<dbReference type="GO" id="GO:0070628">
    <property type="term" value="F:proteasome binding"/>
    <property type="evidence" value="ECO:0007669"/>
    <property type="project" value="UniProtKB-UniRule"/>
</dbReference>
<dbReference type="GO" id="GO:0031386">
    <property type="term" value="F:protein tag activity"/>
    <property type="evidence" value="ECO:0007669"/>
    <property type="project" value="UniProtKB-UniRule"/>
</dbReference>
<dbReference type="GO" id="GO:0019941">
    <property type="term" value="P:modification-dependent protein catabolic process"/>
    <property type="evidence" value="ECO:0007669"/>
    <property type="project" value="UniProtKB-UniRule"/>
</dbReference>
<dbReference type="GO" id="GO:0010498">
    <property type="term" value="P:proteasomal protein catabolic process"/>
    <property type="evidence" value="ECO:0007669"/>
    <property type="project" value="UniProtKB-UniRule"/>
</dbReference>
<dbReference type="GO" id="GO:0070490">
    <property type="term" value="P:protein pupylation"/>
    <property type="evidence" value="ECO:0007669"/>
    <property type="project" value="UniProtKB-UniRule"/>
</dbReference>
<dbReference type="HAMAP" id="MF_02106">
    <property type="entry name" value="Pup"/>
    <property type="match status" value="1"/>
</dbReference>
<dbReference type="InterPro" id="IPR008515">
    <property type="entry name" value="Ubiquitin-like_Pup"/>
</dbReference>
<dbReference type="NCBIfam" id="TIGR03687">
    <property type="entry name" value="pupylate_cterm"/>
    <property type="match status" value="1"/>
</dbReference>
<dbReference type="Pfam" id="PF05639">
    <property type="entry name" value="Pup"/>
    <property type="match status" value="1"/>
</dbReference>